<organism>
    <name type="scientific">Pseudomonas fluorescens (strain Pf0-1)</name>
    <dbReference type="NCBI Taxonomy" id="205922"/>
    <lineage>
        <taxon>Bacteria</taxon>
        <taxon>Pseudomonadati</taxon>
        <taxon>Pseudomonadota</taxon>
        <taxon>Gammaproteobacteria</taxon>
        <taxon>Pseudomonadales</taxon>
        <taxon>Pseudomonadaceae</taxon>
        <taxon>Pseudomonas</taxon>
    </lineage>
</organism>
<gene>
    <name evidence="1" type="primary">rplE</name>
    <name type="ordered locus">Pfl01_5067</name>
</gene>
<dbReference type="EMBL" id="CP000094">
    <property type="protein sequence ID" value="ABA76804.1"/>
    <property type="molecule type" value="Genomic_DNA"/>
</dbReference>
<dbReference type="RefSeq" id="WP_003210069.1">
    <property type="nucleotide sequence ID" value="NC_007492.2"/>
</dbReference>
<dbReference type="SMR" id="Q3K600"/>
<dbReference type="GeneID" id="97827722"/>
<dbReference type="KEGG" id="pfo:Pfl01_5067"/>
<dbReference type="eggNOG" id="COG0094">
    <property type="taxonomic scope" value="Bacteria"/>
</dbReference>
<dbReference type="HOGENOM" id="CLU_061015_2_1_6"/>
<dbReference type="Proteomes" id="UP000002704">
    <property type="component" value="Chromosome"/>
</dbReference>
<dbReference type="GO" id="GO:1990904">
    <property type="term" value="C:ribonucleoprotein complex"/>
    <property type="evidence" value="ECO:0007669"/>
    <property type="project" value="UniProtKB-KW"/>
</dbReference>
<dbReference type="GO" id="GO:0005840">
    <property type="term" value="C:ribosome"/>
    <property type="evidence" value="ECO:0007669"/>
    <property type="project" value="UniProtKB-KW"/>
</dbReference>
<dbReference type="GO" id="GO:0019843">
    <property type="term" value="F:rRNA binding"/>
    <property type="evidence" value="ECO:0007669"/>
    <property type="project" value="UniProtKB-UniRule"/>
</dbReference>
<dbReference type="GO" id="GO:0003735">
    <property type="term" value="F:structural constituent of ribosome"/>
    <property type="evidence" value="ECO:0007669"/>
    <property type="project" value="InterPro"/>
</dbReference>
<dbReference type="GO" id="GO:0000049">
    <property type="term" value="F:tRNA binding"/>
    <property type="evidence" value="ECO:0007669"/>
    <property type="project" value="UniProtKB-UniRule"/>
</dbReference>
<dbReference type="GO" id="GO:0006412">
    <property type="term" value="P:translation"/>
    <property type="evidence" value="ECO:0007669"/>
    <property type="project" value="UniProtKB-UniRule"/>
</dbReference>
<dbReference type="FunFam" id="3.30.1440.10:FF:000001">
    <property type="entry name" value="50S ribosomal protein L5"/>
    <property type="match status" value="1"/>
</dbReference>
<dbReference type="Gene3D" id="3.30.1440.10">
    <property type="match status" value="1"/>
</dbReference>
<dbReference type="HAMAP" id="MF_01333_B">
    <property type="entry name" value="Ribosomal_uL5_B"/>
    <property type="match status" value="1"/>
</dbReference>
<dbReference type="InterPro" id="IPR002132">
    <property type="entry name" value="Ribosomal_uL5"/>
</dbReference>
<dbReference type="InterPro" id="IPR020930">
    <property type="entry name" value="Ribosomal_uL5_bac-type"/>
</dbReference>
<dbReference type="InterPro" id="IPR031309">
    <property type="entry name" value="Ribosomal_uL5_C"/>
</dbReference>
<dbReference type="InterPro" id="IPR020929">
    <property type="entry name" value="Ribosomal_uL5_CS"/>
</dbReference>
<dbReference type="InterPro" id="IPR022803">
    <property type="entry name" value="Ribosomal_uL5_dom_sf"/>
</dbReference>
<dbReference type="InterPro" id="IPR031310">
    <property type="entry name" value="Ribosomal_uL5_N"/>
</dbReference>
<dbReference type="NCBIfam" id="NF000585">
    <property type="entry name" value="PRK00010.1"/>
    <property type="match status" value="1"/>
</dbReference>
<dbReference type="PANTHER" id="PTHR11994">
    <property type="entry name" value="60S RIBOSOMAL PROTEIN L11-RELATED"/>
    <property type="match status" value="1"/>
</dbReference>
<dbReference type="Pfam" id="PF00281">
    <property type="entry name" value="Ribosomal_L5"/>
    <property type="match status" value="1"/>
</dbReference>
<dbReference type="Pfam" id="PF00673">
    <property type="entry name" value="Ribosomal_L5_C"/>
    <property type="match status" value="1"/>
</dbReference>
<dbReference type="PIRSF" id="PIRSF002161">
    <property type="entry name" value="Ribosomal_L5"/>
    <property type="match status" value="1"/>
</dbReference>
<dbReference type="SUPFAM" id="SSF55282">
    <property type="entry name" value="RL5-like"/>
    <property type="match status" value="1"/>
</dbReference>
<dbReference type="PROSITE" id="PS00358">
    <property type="entry name" value="RIBOSOMAL_L5"/>
    <property type="match status" value="1"/>
</dbReference>
<keyword id="KW-0687">Ribonucleoprotein</keyword>
<keyword id="KW-0689">Ribosomal protein</keyword>
<keyword id="KW-0694">RNA-binding</keyword>
<keyword id="KW-0699">rRNA-binding</keyword>
<keyword id="KW-0820">tRNA-binding</keyword>
<feature type="chain" id="PRO_0000243043" description="Large ribosomal subunit protein uL5">
    <location>
        <begin position="1"/>
        <end position="179"/>
    </location>
</feature>
<evidence type="ECO:0000255" key="1">
    <source>
        <dbReference type="HAMAP-Rule" id="MF_01333"/>
    </source>
</evidence>
<evidence type="ECO:0000305" key="2"/>
<protein>
    <recommendedName>
        <fullName evidence="1">Large ribosomal subunit protein uL5</fullName>
    </recommendedName>
    <alternativeName>
        <fullName evidence="2">50S ribosomal protein L5</fullName>
    </alternativeName>
</protein>
<proteinExistence type="inferred from homology"/>
<name>RL5_PSEPF</name>
<sequence>MARLKEIYRKEIAPKLKEELKLSNVMEVPRVTKITLNMGLGEAIGDKKVIEHAVADLEKITGQKVVVTYARKSIAGFKVREGWPIGVKVTLRRERMYEFLDRLLSISLPRVRDFRGLNAKSFDGRGNYSMGVKEQIIFPEIDYDKIDALRGLDITLTTTAKNDDEGRALLRAFKFPFRN</sequence>
<comment type="function">
    <text evidence="1">This is one of the proteins that bind and probably mediate the attachment of the 5S RNA into the large ribosomal subunit, where it forms part of the central protuberance. In the 70S ribosome it contacts protein S13 of the 30S subunit (bridge B1b), connecting the 2 subunits; this bridge is implicated in subunit movement. Contacts the P site tRNA; the 5S rRNA and some of its associated proteins might help stabilize positioning of ribosome-bound tRNAs.</text>
</comment>
<comment type="subunit">
    <text evidence="1">Part of the 50S ribosomal subunit; part of the 5S rRNA/L5/L18/L25 subcomplex. Contacts the 5S rRNA and the P site tRNA. Forms a bridge to the 30S subunit in the 70S ribosome.</text>
</comment>
<comment type="similarity">
    <text evidence="1">Belongs to the universal ribosomal protein uL5 family.</text>
</comment>
<reference key="1">
    <citation type="journal article" date="2009" name="Genome Biol.">
        <title>Genomic and genetic analyses of diversity and plant interactions of Pseudomonas fluorescens.</title>
        <authorList>
            <person name="Silby M.W."/>
            <person name="Cerdeno-Tarraga A.M."/>
            <person name="Vernikos G.S."/>
            <person name="Giddens S.R."/>
            <person name="Jackson R.W."/>
            <person name="Preston G.M."/>
            <person name="Zhang X.-X."/>
            <person name="Moon C.D."/>
            <person name="Gehrig S.M."/>
            <person name="Godfrey S.A.C."/>
            <person name="Knight C.G."/>
            <person name="Malone J.G."/>
            <person name="Robinson Z."/>
            <person name="Spiers A.J."/>
            <person name="Harris S."/>
            <person name="Challis G.L."/>
            <person name="Yaxley A.M."/>
            <person name="Harris D."/>
            <person name="Seeger K."/>
            <person name="Murphy L."/>
            <person name="Rutter S."/>
            <person name="Squares R."/>
            <person name="Quail M.A."/>
            <person name="Saunders E."/>
            <person name="Mavromatis K."/>
            <person name="Brettin T.S."/>
            <person name="Bentley S.D."/>
            <person name="Hothersall J."/>
            <person name="Stephens E."/>
            <person name="Thomas C.M."/>
            <person name="Parkhill J."/>
            <person name="Levy S.B."/>
            <person name="Rainey P.B."/>
            <person name="Thomson N.R."/>
        </authorList>
    </citation>
    <scope>NUCLEOTIDE SEQUENCE [LARGE SCALE GENOMIC DNA]</scope>
    <source>
        <strain>Pf0-1</strain>
    </source>
</reference>
<accession>Q3K600</accession>